<accession>A9I8F5</accession>
<reference key="1">
    <citation type="journal article" date="2008" name="BMC Genomics">
        <title>The missing link: Bordetella petrii is endowed with both the metabolic versatility of environmental bacteria and virulence traits of pathogenic Bordetellae.</title>
        <authorList>
            <person name="Gross R."/>
            <person name="Guzman C.A."/>
            <person name="Sebaihia M."/>
            <person name="Martin dos Santos V.A.P."/>
            <person name="Pieper D.H."/>
            <person name="Koebnik R."/>
            <person name="Lechner M."/>
            <person name="Bartels D."/>
            <person name="Buhrmester J."/>
            <person name="Choudhuri J.V."/>
            <person name="Ebensen T."/>
            <person name="Gaigalat L."/>
            <person name="Herrmann S."/>
            <person name="Khachane A.N."/>
            <person name="Larisch C."/>
            <person name="Link S."/>
            <person name="Linke B."/>
            <person name="Meyer F."/>
            <person name="Mormann S."/>
            <person name="Nakunst D."/>
            <person name="Rueckert C."/>
            <person name="Schneiker-Bekel S."/>
            <person name="Schulze K."/>
            <person name="Voerholter F.-J."/>
            <person name="Yevsa T."/>
            <person name="Engle J.T."/>
            <person name="Goldman W.E."/>
            <person name="Puehler A."/>
            <person name="Goebel U.B."/>
            <person name="Goesmann A."/>
            <person name="Bloecker H."/>
            <person name="Kaiser O."/>
            <person name="Martinez-Arias R."/>
        </authorList>
    </citation>
    <scope>NUCLEOTIDE SEQUENCE [LARGE SCALE GENOMIC DNA]</scope>
    <source>
        <strain>ATCC BAA-461 / DSM 12804 / CCUG 43448</strain>
    </source>
</reference>
<feature type="chain" id="PRO_1000090503" description="Crossover junction endodeoxyribonuclease RuvC">
    <location>
        <begin position="1"/>
        <end position="182"/>
    </location>
</feature>
<feature type="active site" evidence="1">
    <location>
        <position position="7"/>
    </location>
</feature>
<feature type="active site" evidence="1">
    <location>
        <position position="67"/>
    </location>
</feature>
<feature type="active site" evidence="1">
    <location>
        <position position="139"/>
    </location>
</feature>
<feature type="binding site" evidence="1">
    <location>
        <position position="7"/>
    </location>
    <ligand>
        <name>Mg(2+)</name>
        <dbReference type="ChEBI" id="CHEBI:18420"/>
        <label>1</label>
    </ligand>
</feature>
<feature type="binding site" evidence="1">
    <location>
        <position position="67"/>
    </location>
    <ligand>
        <name>Mg(2+)</name>
        <dbReference type="ChEBI" id="CHEBI:18420"/>
        <label>2</label>
    </ligand>
</feature>
<feature type="binding site" evidence="1">
    <location>
        <position position="139"/>
    </location>
    <ligand>
        <name>Mg(2+)</name>
        <dbReference type="ChEBI" id="CHEBI:18420"/>
        <label>1</label>
    </ligand>
</feature>
<organism>
    <name type="scientific">Bordetella petrii (strain ATCC BAA-461 / DSM 12804 / CCUG 43448)</name>
    <dbReference type="NCBI Taxonomy" id="340100"/>
    <lineage>
        <taxon>Bacteria</taxon>
        <taxon>Pseudomonadati</taxon>
        <taxon>Pseudomonadota</taxon>
        <taxon>Betaproteobacteria</taxon>
        <taxon>Burkholderiales</taxon>
        <taxon>Alcaligenaceae</taxon>
        <taxon>Bordetella</taxon>
    </lineage>
</organism>
<evidence type="ECO:0000255" key="1">
    <source>
        <dbReference type="HAMAP-Rule" id="MF_00034"/>
    </source>
</evidence>
<protein>
    <recommendedName>
        <fullName evidence="1">Crossover junction endodeoxyribonuclease RuvC</fullName>
        <ecNumber evidence="1">3.1.21.10</ecNumber>
    </recommendedName>
    <alternativeName>
        <fullName evidence="1">Holliday junction nuclease RuvC</fullName>
    </alternativeName>
    <alternativeName>
        <fullName evidence="1">Holliday junction resolvase RuvC</fullName>
    </alternativeName>
</protein>
<dbReference type="EC" id="3.1.21.10" evidence="1"/>
<dbReference type="EMBL" id="AM902716">
    <property type="protein sequence ID" value="CAP41237.1"/>
    <property type="molecule type" value="Genomic_DNA"/>
</dbReference>
<dbReference type="SMR" id="A9I8F5"/>
<dbReference type="STRING" id="94624.Bpet0905"/>
<dbReference type="KEGG" id="bpt:Bpet0905"/>
<dbReference type="eggNOG" id="COG0817">
    <property type="taxonomic scope" value="Bacteria"/>
</dbReference>
<dbReference type="Proteomes" id="UP000001225">
    <property type="component" value="Chromosome"/>
</dbReference>
<dbReference type="GO" id="GO:0005737">
    <property type="term" value="C:cytoplasm"/>
    <property type="evidence" value="ECO:0007669"/>
    <property type="project" value="UniProtKB-SubCell"/>
</dbReference>
<dbReference type="GO" id="GO:0048476">
    <property type="term" value="C:Holliday junction resolvase complex"/>
    <property type="evidence" value="ECO:0007669"/>
    <property type="project" value="UniProtKB-UniRule"/>
</dbReference>
<dbReference type="GO" id="GO:0008821">
    <property type="term" value="F:crossover junction DNA endonuclease activity"/>
    <property type="evidence" value="ECO:0007669"/>
    <property type="project" value="UniProtKB-UniRule"/>
</dbReference>
<dbReference type="GO" id="GO:0003677">
    <property type="term" value="F:DNA binding"/>
    <property type="evidence" value="ECO:0007669"/>
    <property type="project" value="UniProtKB-KW"/>
</dbReference>
<dbReference type="GO" id="GO:0000287">
    <property type="term" value="F:magnesium ion binding"/>
    <property type="evidence" value="ECO:0007669"/>
    <property type="project" value="UniProtKB-UniRule"/>
</dbReference>
<dbReference type="GO" id="GO:0006310">
    <property type="term" value="P:DNA recombination"/>
    <property type="evidence" value="ECO:0007669"/>
    <property type="project" value="UniProtKB-UniRule"/>
</dbReference>
<dbReference type="GO" id="GO:0006281">
    <property type="term" value="P:DNA repair"/>
    <property type="evidence" value="ECO:0007669"/>
    <property type="project" value="UniProtKB-UniRule"/>
</dbReference>
<dbReference type="CDD" id="cd16962">
    <property type="entry name" value="RuvC"/>
    <property type="match status" value="1"/>
</dbReference>
<dbReference type="FunFam" id="3.30.420.10:FF:000002">
    <property type="entry name" value="Crossover junction endodeoxyribonuclease RuvC"/>
    <property type="match status" value="1"/>
</dbReference>
<dbReference type="Gene3D" id="3.30.420.10">
    <property type="entry name" value="Ribonuclease H-like superfamily/Ribonuclease H"/>
    <property type="match status" value="1"/>
</dbReference>
<dbReference type="HAMAP" id="MF_00034">
    <property type="entry name" value="RuvC"/>
    <property type="match status" value="1"/>
</dbReference>
<dbReference type="InterPro" id="IPR012337">
    <property type="entry name" value="RNaseH-like_sf"/>
</dbReference>
<dbReference type="InterPro" id="IPR036397">
    <property type="entry name" value="RNaseH_sf"/>
</dbReference>
<dbReference type="InterPro" id="IPR020563">
    <property type="entry name" value="X-over_junc_endoDNase_Mg_BS"/>
</dbReference>
<dbReference type="InterPro" id="IPR002176">
    <property type="entry name" value="X-over_junc_endoDNase_RuvC"/>
</dbReference>
<dbReference type="NCBIfam" id="TIGR00228">
    <property type="entry name" value="ruvC"/>
    <property type="match status" value="1"/>
</dbReference>
<dbReference type="PANTHER" id="PTHR30194">
    <property type="entry name" value="CROSSOVER JUNCTION ENDODEOXYRIBONUCLEASE RUVC"/>
    <property type="match status" value="1"/>
</dbReference>
<dbReference type="PANTHER" id="PTHR30194:SF3">
    <property type="entry name" value="CROSSOVER JUNCTION ENDODEOXYRIBONUCLEASE RUVC"/>
    <property type="match status" value="1"/>
</dbReference>
<dbReference type="Pfam" id="PF02075">
    <property type="entry name" value="RuvC"/>
    <property type="match status" value="1"/>
</dbReference>
<dbReference type="PRINTS" id="PR00696">
    <property type="entry name" value="RSOLVASERUVC"/>
</dbReference>
<dbReference type="SUPFAM" id="SSF53098">
    <property type="entry name" value="Ribonuclease H-like"/>
    <property type="match status" value="1"/>
</dbReference>
<dbReference type="PROSITE" id="PS01321">
    <property type="entry name" value="RUVC"/>
    <property type="match status" value="1"/>
</dbReference>
<keyword id="KW-0963">Cytoplasm</keyword>
<keyword id="KW-0227">DNA damage</keyword>
<keyword id="KW-0233">DNA recombination</keyword>
<keyword id="KW-0234">DNA repair</keyword>
<keyword id="KW-0238">DNA-binding</keyword>
<keyword id="KW-0255">Endonuclease</keyword>
<keyword id="KW-0378">Hydrolase</keyword>
<keyword id="KW-0460">Magnesium</keyword>
<keyword id="KW-0479">Metal-binding</keyword>
<keyword id="KW-0540">Nuclease</keyword>
<comment type="function">
    <text evidence="1">The RuvA-RuvB-RuvC complex processes Holliday junction (HJ) DNA during genetic recombination and DNA repair. Endonuclease that resolves HJ intermediates. Cleaves cruciform DNA by making single-stranded nicks across the HJ at symmetrical positions within the homologous arms, yielding a 5'-phosphate and a 3'-hydroxyl group; requires a central core of homology in the junction. The consensus cleavage sequence is 5'-(A/T)TT(C/G)-3'. Cleavage occurs on the 3'-side of the TT dinucleotide at the point of strand exchange. HJ branch migration catalyzed by RuvA-RuvB allows RuvC to scan DNA until it finds its consensus sequence, where it cleaves and resolves the cruciform DNA.</text>
</comment>
<comment type="catalytic activity">
    <reaction evidence="1">
        <text>Endonucleolytic cleavage at a junction such as a reciprocal single-stranded crossover between two homologous DNA duplexes (Holliday junction).</text>
        <dbReference type="EC" id="3.1.21.10"/>
    </reaction>
</comment>
<comment type="cofactor">
    <cofactor evidence="1">
        <name>Mg(2+)</name>
        <dbReference type="ChEBI" id="CHEBI:18420"/>
    </cofactor>
    <text evidence="1">Binds 2 Mg(2+) ion per subunit.</text>
</comment>
<comment type="subunit">
    <text evidence="1">Homodimer which binds Holliday junction (HJ) DNA. The HJ becomes 2-fold symmetrical on binding to RuvC with unstacked arms; it has a different conformation from HJ DNA in complex with RuvA. In the full resolvosome a probable DNA-RuvA(4)-RuvB(12)-RuvC(2) complex forms which resolves the HJ.</text>
</comment>
<comment type="subcellular location">
    <subcellularLocation>
        <location evidence="1">Cytoplasm</location>
    </subcellularLocation>
</comment>
<comment type="similarity">
    <text evidence="1">Belongs to the RuvC family.</text>
</comment>
<sequence>MRVLGIDPGLRRTGFGVIDAEGMRLRYVASGTIVVPPALALPERLKVILDNLRQVARDTRPDVAALEIVFLNTNPASTLLLGQARGAALCALADSQLAVHEYTALQIKKAVVGTGRAAKEQVQMMVQRLLSLDGTPAPDSADALACAICHAHVGPLQARLGGLSAATGLGGGTRVRGGRLVG</sequence>
<gene>
    <name evidence="1" type="primary">ruvC</name>
    <name type="ordered locus">Bpet0905</name>
</gene>
<name>RUVC_BORPD</name>
<proteinExistence type="inferred from homology"/>